<proteinExistence type="inferred from homology"/>
<name>GLMM_XANOM</name>
<protein>
    <recommendedName>
        <fullName evidence="1">Phosphoglucosamine mutase</fullName>
        <ecNumber evidence="1">5.4.2.10</ecNumber>
    </recommendedName>
</protein>
<organism>
    <name type="scientific">Xanthomonas oryzae pv. oryzae (strain MAFF 311018)</name>
    <dbReference type="NCBI Taxonomy" id="342109"/>
    <lineage>
        <taxon>Bacteria</taxon>
        <taxon>Pseudomonadati</taxon>
        <taxon>Pseudomonadota</taxon>
        <taxon>Gammaproteobacteria</taxon>
        <taxon>Lysobacterales</taxon>
        <taxon>Lysobacteraceae</taxon>
        <taxon>Xanthomonas</taxon>
    </lineage>
</organism>
<gene>
    <name evidence="1" type="primary">glmM</name>
    <name type="ordered locus">XOO3077</name>
</gene>
<sequence>MSARKYFGTDGIRGRVGQGVISADFVLRLGNALGRVLTQIRGKRPLVLIGKDTRISGYMFEAALEAGLVAAGADVQLIGPMPTPAIAFLTSTLRADAGVVISASHNPHYDNGIKFFSAEGEKLDDATEAAIEAALDAPFHTVESERLGKAIRTRDAIGRYIEFCKASVARGFTLKWLKMVLDCAHGATYHIAPMLFRELGAEVVVIGAAPDGLNINAGVGSTHIDNLAAKVREYGAHLGIAFDGDGDRVLMADDQGNPVDGDDLLYVLARSWQASGRLTGTVVGTLMTNYGLEQALAALNIPFQRAKVGDRYVHQALVEGGGTLGGETSGHLLCLDRATTGDGIVSALQVLEALGRDGHSLRKALSSLSKVPQKTVNVRLDGGAAKAIVEAANVQQALQQAQAAVQGRGRAFLRPSGTEPVVRVTVEADDARLMQDTLDRLSGAVRDAA</sequence>
<evidence type="ECO:0000255" key="1">
    <source>
        <dbReference type="HAMAP-Rule" id="MF_01554"/>
    </source>
</evidence>
<feature type="chain" id="PRO_0000301402" description="Phosphoglucosamine mutase">
    <location>
        <begin position="1"/>
        <end position="449"/>
    </location>
</feature>
<feature type="active site" description="Phosphoserine intermediate" evidence="1">
    <location>
        <position position="104"/>
    </location>
</feature>
<feature type="binding site" description="via phosphate group" evidence="1">
    <location>
        <position position="104"/>
    </location>
    <ligand>
        <name>Mg(2+)</name>
        <dbReference type="ChEBI" id="CHEBI:18420"/>
    </ligand>
</feature>
<feature type="binding site" evidence="1">
    <location>
        <position position="243"/>
    </location>
    <ligand>
        <name>Mg(2+)</name>
        <dbReference type="ChEBI" id="CHEBI:18420"/>
    </ligand>
</feature>
<feature type="binding site" evidence="1">
    <location>
        <position position="245"/>
    </location>
    <ligand>
        <name>Mg(2+)</name>
        <dbReference type="ChEBI" id="CHEBI:18420"/>
    </ligand>
</feature>
<feature type="binding site" evidence="1">
    <location>
        <position position="247"/>
    </location>
    <ligand>
        <name>Mg(2+)</name>
        <dbReference type="ChEBI" id="CHEBI:18420"/>
    </ligand>
</feature>
<feature type="modified residue" description="Phosphoserine" evidence="1">
    <location>
        <position position="104"/>
    </location>
</feature>
<comment type="function">
    <text evidence="1">Catalyzes the conversion of glucosamine-6-phosphate to glucosamine-1-phosphate.</text>
</comment>
<comment type="catalytic activity">
    <reaction evidence="1">
        <text>alpha-D-glucosamine 1-phosphate = D-glucosamine 6-phosphate</text>
        <dbReference type="Rhea" id="RHEA:23424"/>
        <dbReference type="ChEBI" id="CHEBI:58516"/>
        <dbReference type="ChEBI" id="CHEBI:58725"/>
        <dbReference type="EC" id="5.4.2.10"/>
    </reaction>
</comment>
<comment type="cofactor">
    <cofactor evidence="1">
        <name>Mg(2+)</name>
        <dbReference type="ChEBI" id="CHEBI:18420"/>
    </cofactor>
    <text evidence="1">Binds 1 Mg(2+) ion per subunit.</text>
</comment>
<comment type="PTM">
    <text evidence="1">Activated by phosphorylation.</text>
</comment>
<comment type="similarity">
    <text evidence="1">Belongs to the phosphohexose mutase family.</text>
</comment>
<accession>Q2P0U5</accession>
<dbReference type="EC" id="5.4.2.10" evidence="1"/>
<dbReference type="EMBL" id="AP008229">
    <property type="protein sequence ID" value="BAE69832.1"/>
    <property type="molecule type" value="Genomic_DNA"/>
</dbReference>
<dbReference type="RefSeq" id="WP_011259759.1">
    <property type="nucleotide sequence ID" value="NC_007705.1"/>
</dbReference>
<dbReference type="SMR" id="Q2P0U5"/>
<dbReference type="KEGG" id="xom:XOO3077"/>
<dbReference type="HOGENOM" id="CLU_016950_7_0_6"/>
<dbReference type="GO" id="GO:0005829">
    <property type="term" value="C:cytosol"/>
    <property type="evidence" value="ECO:0007669"/>
    <property type="project" value="TreeGrafter"/>
</dbReference>
<dbReference type="GO" id="GO:0000287">
    <property type="term" value="F:magnesium ion binding"/>
    <property type="evidence" value="ECO:0007669"/>
    <property type="project" value="UniProtKB-UniRule"/>
</dbReference>
<dbReference type="GO" id="GO:0008966">
    <property type="term" value="F:phosphoglucosamine mutase activity"/>
    <property type="evidence" value="ECO:0007669"/>
    <property type="project" value="UniProtKB-UniRule"/>
</dbReference>
<dbReference type="GO" id="GO:0004615">
    <property type="term" value="F:phosphomannomutase activity"/>
    <property type="evidence" value="ECO:0007669"/>
    <property type="project" value="TreeGrafter"/>
</dbReference>
<dbReference type="GO" id="GO:0005975">
    <property type="term" value="P:carbohydrate metabolic process"/>
    <property type="evidence" value="ECO:0007669"/>
    <property type="project" value="InterPro"/>
</dbReference>
<dbReference type="GO" id="GO:0009252">
    <property type="term" value="P:peptidoglycan biosynthetic process"/>
    <property type="evidence" value="ECO:0007669"/>
    <property type="project" value="TreeGrafter"/>
</dbReference>
<dbReference type="GO" id="GO:0006048">
    <property type="term" value="P:UDP-N-acetylglucosamine biosynthetic process"/>
    <property type="evidence" value="ECO:0007669"/>
    <property type="project" value="TreeGrafter"/>
</dbReference>
<dbReference type="CDD" id="cd05802">
    <property type="entry name" value="GlmM"/>
    <property type="match status" value="1"/>
</dbReference>
<dbReference type="FunFam" id="3.30.310.50:FF:000001">
    <property type="entry name" value="Phosphoglucosamine mutase"/>
    <property type="match status" value="1"/>
</dbReference>
<dbReference type="FunFam" id="3.40.120.10:FF:000001">
    <property type="entry name" value="Phosphoglucosamine mutase"/>
    <property type="match status" value="1"/>
</dbReference>
<dbReference type="FunFam" id="3.40.120.10:FF:000003">
    <property type="entry name" value="Phosphoglucosamine mutase"/>
    <property type="match status" value="1"/>
</dbReference>
<dbReference type="Gene3D" id="3.40.120.10">
    <property type="entry name" value="Alpha-D-Glucose-1,6-Bisphosphate, subunit A, domain 3"/>
    <property type="match status" value="3"/>
</dbReference>
<dbReference type="Gene3D" id="3.30.310.50">
    <property type="entry name" value="Alpha-D-phosphohexomutase, C-terminal domain"/>
    <property type="match status" value="1"/>
</dbReference>
<dbReference type="HAMAP" id="MF_01554_B">
    <property type="entry name" value="GlmM_B"/>
    <property type="match status" value="1"/>
</dbReference>
<dbReference type="InterPro" id="IPR005844">
    <property type="entry name" value="A-D-PHexomutase_a/b/a-I"/>
</dbReference>
<dbReference type="InterPro" id="IPR016055">
    <property type="entry name" value="A-D-PHexomutase_a/b/a-I/II/III"/>
</dbReference>
<dbReference type="InterPro" id="IPR005845">
    <property type="entry name" value="A-D-PHexomutase_a/b/a-II"/>
</dbReference>
<dbReference type="InterPro" id="IPR005846">
    <property type="entry name" value="A-D-PHexomutase_a/b/a-III"/>
</dbReference>
<dbReference type="InterPro" id="IPR005843">
    <property type="entry name" value="A-D-PHexomutase_C"/>
</dbReference>
<dbReference type="InterPro" id="IPR036900">
    <property type="entry name" value="A-D-PHexomutase_C_sf"/>
</dbReference>
<dbReference type="InterPro" id="IPR016066">
    <property type="entry name" value="A-D-PHexomutase_CS"/>
</dbReference>
<dbReference type="InterPro" id="IPR005841">
    <property type="entry name" value="Alpha-D-phosphohexomutase_SF"/>
</dbReference>
<dbReference type="InterPro" id="IPR006352">
    <property type="entry name" value="GlmM_bact"/>
</dbReference>
<dbReference type="InterPro" id="IPR050060">
    <property type="entry name" value="Phosphoglucosamine_mutase"/>
</dbReference>
<dbReference type="NCBIfam" id="TIGR01455">
    <property type="entry name" value="glmM"/>
    <property type="match status" value="1"/>
</dbReference>
<dbReference type="NCBIfam" id="NF008139">
    <property type="entry name" value="PRK10887.1"/>
    <property type="match status" value="1"/>
</dbReference>
<dbReference type="PANTHER" id="PTHR42946:SF1">
    <property type="entry name" value="PHOSPHOGLUCOMUTASE (ALPHA-D-GLUCOSE-1,6-BISPHOSPHATE-DEPENDENT)"/>
    <property type="match status" value="1"/>
</dbReference>
<dbReference type="PANTHER" id="PTHR42946">
    <property type="entry name" value="PHOSPHOHEXOSE MUTASE"/>
    <property type="match status" value="1"/>
</dbReference>
<dbReference type="Pfam" id="PF02878">
    <property type="entry name" value="PGM_PMM_I"/>
    <property type="match status" value="1"/>
</dbReference>
<dbReference type="Pfam" id="PF02879">
    <property type="entry name" value="PGM_PMM_II"/>
    <property type="match status" value="1"/>
</dbReference>
<dbReference type="Pfam" id="PF02880">
    <property type="entry name" value="PGM_PMM_III"/>
    <property type="match status" value="1"/>
</dbReference>
<dbReference type="Pfam" id="PF00408">
    <property type="entry name" value="PGM_PMM_IV"/>
    <property type="match status" value="1"/>
</dbReference>
<dbReference type="PRINTS" id="PR00509">
    <property type="entry name" value="PGMPMM"/>
</dbReference>
<dbReference type="SUPFAM" id="SSF55957">
    <property type="entry name" value="Phosphoglucomutase, C-terminal domain"/>
    <property type="match status" value="1"/>
</dbReference>
<dbReference type="SUPFAM" id="SSF53738">
    <property type="entry name" value="Phosphoglucomutase, first 3 domains"/>
    <property type="match status" value="3"/>
</dbReference>
<dbReference type="PROSITE" id="PS00710">
    <property type="entry name" value="PGM_PMM"/>
    <property type="match status" value="1"/>
</dbReference>
<keyword id="KW-0413">Isomerase</keyword>
<keyword id="KW-0460">Magnesium</keyword>
<keyword id="KW-0479">Metal-binding</keyword>
<keyword id="KW-0597">Phosphoprotein</keyword>
<reference key="1">
    <citation type="journal article" date="2005" name="Jpn. Agric. Res. Q.">
        <title>Genome sequence of Xanthomonas oryzae pv. oryzae suggests contribution of large numbers of effector genes and insertion sequences to its race diversity.</title>
        <authorList>
            <person name="Ochiai H."/>
            <person name="Inoue Y."/>
            <person name="Takeya M."/>
            <person name="Sasaki A."/>
            <person name="Kaku H."/>
        </authorList>
    </citation>
    <scope>NUCLEOTIDE SEQUENCE [LARGE SCALE GENOMIC DNA]</scope>
    <source>
        <strain>MAFF 311018</strain>
    </source>
</reference>